<evidence type="ECO:0000255" key="1">
    <source>
        <dbReference type="HAMAP-Rule" id="MF_00503"/>
    </source>
</evidence>
<evidence type="ECO:0000305" key="2"/>
<sequence>MQIILLEKVVNLGNLGDIVKVKDGYARNFLIPQRMAKRATPAAMAEFEARRAELEKLAAEKLAAAQAVADKMNGTVVTVARKAGMDGRLFGSVGNADIADALKAAGYVVDKSAVRMPEGPLKAIGEFPLDVALHTDVLANITVAIVAE</sequence>
<dbReference type="EMBL" id="CP000089">
    <property type="protein sequence ID" value="AAZ45975.1"/>
    <property type="molecule type" value="Genomic_DNA"/>
</dbReference>
<dbReference type="SMR" id="Q47GQ6"/>
<dbReference type="STRING" id="159087.Daro_1219"/>
<dbReference type="KEGG" id="dar:Daro_1219"/>
<dbReference type="eggNOG" id="COG0359">
    <property type="taxonomic scope" value="Bacteria"/>
</dbReference>
<dbReference type="HOGENOM" id="CLU_078938_4_1_4"/>
<dbReference type="OrthoDB" id="9788336at2"/>
<dbReference type="GO" id="GO:1990904">
    <property type="term" value="C:ribonucleoprotein complex"/>
    <property type="evidence" value="ECO:0007669"/>
    <property type="project" value="UniProtKB-KW"/>
</dbReference>
<dbReference type="GO" id="GO:0005840">
    <property type="term" value="C:ribosome"/>
    <property type="evidence" value="ECO:0007669"/>
    <property type="project" value="UniProtKB-KW"/>
</dbReference>
<dbReference type="GO" id="GO:0019843">
    <property type="term" value="F:rRNA binding"/>
    <property type="evidence" value="ECO:0007669"/>
    <property type="project" value="UniProtKB-UniRule"/>
</dbReference>
<dbReference type="GO" id="GO:0003735">
    <property type="term" value="F:structural constituent of ribosome"/>
    <property type="evidence" value="ECO:0007669"/>
    <property type="project" value="InterPro"/>
</dbReference>
<dbReference type="GO" id="GO:0006412">
    <property type="term" value="P:translation"/>
    <property type="evidence" value="ECO:0007669"/>
    <property type="project" value="UniProtKB-UniRule"/>
</dbReference>
<dbReference type="Gene3D" id="3.10.430.100">
    <property type="entry name" value="Ribosomal protein L9, C-terminal domain"/>
    <property type="match status" value="1"/>
</dbReference>
<dbReference type="Gene3D" id="3.40.5.10">
    <property type="entry name" value="Ribosomal protein L9, N-terminal domain"/>
    <property type="match status" value="1"/>
</dbReference>
<dbReference type="HAMAP" id="MF_00503">
    <property type="entry name" value="Ribosomal_bL9"/>
    <property type="match status" value="1"/>
</dbReference>
<dbReference type="InterPro" id="IPR000244">
    <property type="entry name" value="Ribosomal_bL9"/>
</dbReference>
<dbReference type="InterPro" id="IPR009027">
    <property type="entry name" value="Ribosomal_bL9/RNase_H1_N"/>
</dbReference>
<dbReference type="InterPro" id="IPR020594">
    <property type="entry name" value="Ribosomal_bL9_bac/chp"/>
</dbReference>
<dbReference type="InterPro" id="IPR020069">
    <property type="entry name" value="Ribosomal_bL9_C"/>
</dbReference>
<dbReference type="InterPro" id="IPR036791">
    <property type="entry name" value="Ribosomal_bL9_C_sf"/>
</dbReference>
<dbReference type="InterPro" id="IPR020070">
    <property type="entry name" value="Ribosomal_bL9_N"/>
</dbReference>
<dbReference type="InterPro" id="IPR036935">
    <property type="entry name" value="Ribosomal_bL9_N_sf"/>
</dbReference>
<dbReference type="NCBIfam" id="TIGR00158">
    <property type="entry name" value="L9"/>
    <property type="match status" value="1"/>
</dbReference>
<dbReference type="PANTHER" id="PTHR21368">
    <property type="entry name" value="50S RIBOSOMAL PROTEIN L9"/>
    <property type="match status" value="1"/>
</dbReference>
<dbReference type="Pfam" id="PF03948">
    <property type="entry name" value="Ribosomal_L9_C"/>
    <property type="match status" value="1"/>
</dbReference>
<dbReference type="Pfam" id="PF01281">
    <property type="entry name" value="Ribosomal_L9_N"/>
    <property type="match status" value="1"/>
</dbReference>
<dbReference type="SUPFAM" id="SSF55658">
    <property type="entry name" value="L9 N-domain-like"/>
    <property type="match status" value="1"/>
</dbReference>
<dbReference type="SUPFAM" id="SSF55653">
    <property type="entry name" value="Ribosomal protein L9 C-domain"/>
    <property type="match status" value="1"/>
</dbReference>
<dbReference type="PROSITE" id="PS00651">
    <property type="entry name" value="RIBOSOMAL_L9"/>
    <property type="match status" value="1"/>
</dbReference>
<organism>
    <name type="scientific">Dechloromonas aromatica (strain RCB)</name>
    <dbReference type="NCBI Taxonomy" id="159087"/>
    <lineage>
        <taxon>Bacteria</taxon>
        <taxon>Pseudomonadati</taxon>
        <taxon>Pseudomonadota</taxon>
        <taxon>Betaproteobacteria</taxon>
        <taxon>Rhodocyclales</taxon>
        <taxon>Azonexaceae</taxon>
        <taxon>Dechloromonas</taxon>
    </lineage>
</organism>
<protein>
    <recommendedName>
        <fullName evidence="1">Large ribosomal subunit protein bL9</fullName>
    </recommendedName>
    <alternativeName>
        <fullName evidence="2">50S ribosomal protein L9</fullName>
    </alternativeName>
</protein>
<gene>
    <name evidence="1" type="primary">rplI</name>
    <name type="ordered locus">Daro_1219</name>
</gene>
<proteinExistence type="inferred from homology"/>
<keyword id="KW-0687">Ribonucleoprotein</keyword>
<keyword id="KW-0689">Ribosomal protein</keyword>
<keyword id="KW-0694">RNA-binding</keyword>
<keyword id="KW-0699">rRNA-binding</keyword>
<accession>Q47GQ6</accession>
<comment type="function">
    <text evidence="1">Binds to the 23S rRNA.</text>
</comment>
<comment type="similarity">
    <text evidence="1">Belongs to the bacterial ribosomal protein bL9 family.</text>
</comment>
<name>RL9_DECAR</name>
<reference key="1">
    <citation type="journal article" date="2009" name="BMC Genomics">
        <title>Metabolic analysis of the soil microbe Dechloromonas aromatica str. RCB: indications of a surprisingly complex life-style and cryptic anaerobic pathways for aromatic degradation.</title>
        <authorList>
            <person name="Salinero K.K."/>
            <person name="Keller K."/>
            <person name="Feil W.S."/>
            <person name="Feil H."/>
            <person name="Trong S."/>
            <person name="Di Bartolo G."/>
            <person name="Lapidus A."/>
        </authorList>
    </citation>
    <scope>NUCLEOTIDE SEQUENCE [LARGE SCALE GENOMIC DNA]</scope>
    <source>
        <strain>RCB</strain>
    </source>
</reference>
<feature type="chain" id="PRO_0000236514" description="Large ribosomal subunit protein bL9">
    <location>
        <begin position="1"/>
        <end position="148"/>
    </location>
</feature>